<dbReference type="EC" id="3.5.1.108" evidence="1"/>
<dbReference type="EMBL" id="CP001120">
    <property type="protein sequence ID" value="ACF67043.1"/>
    <property type="molecule type" value="Genomic_DNA"/>
</dbReference>
<dbReference type="RefSeq" id="WP_000595487.1">
    <property type="nucleotide sequence ID" value="NC_011083.1"/>
</dbReference>
<dbReference type="SMR" id="B4TJ93"/>
<dbReference type="KEGG" id="seh:SeHA_C0146"/>
<dbReference type="HOGENOM" id="CLU_046528_1_0_6"/>
<dbReference type="UniPathway" id="UPA00359">
    <property type="reaction ID" value="UER00478"/>
</dbReference>
<dbReference type="Proteomes" id="UP000001866">
    <property type="component" value="Chromosome"/>
</dbReference>
<dbReference type="GO" id="GO:0016020">
    <property type="term" value="C:membrane"/>
    <property type="evidence" value="ECO:0007669"/>
    <property type="project" value="GOC"/>
</dbReference>
<dbReference type="GO" id="GO:0046872">
    <property type="term" value="F:metal ion binding"/>
    <property type="evidence" value="ECO:0007669"/>
    <property type="project" value="UniProtKB-KW"/>
</dbReference>
<dbReference type="GO" id="GO:0103117">
    <property type="term" value="F:UDP-3-O-acyl-N-acetylglucosamine deacetylase activity"/>
    <property type="evidence" value="ECO:0007669"/>
    <property type="project" value="UniProtKB-UniRule"/>
</dbReference>
<dbReference type="GO" id="GO:0009245">
    <property type="term" value="P:lipid A biosynthetic process"/>
    <property type="evidence" value="ECO:0007669"/>
    <property type="project" value="UniProtKB-UniRule"/>
</dbReference>
<dbReference type="FunFam" id="3.30.1700.10:FF:000001">
    <property type="entry name" value="UDP-3-O-acyl-N-acetylglucosamine deacetylase"/>
    <property type="match status" value="1"/>
</dbReference>
<dbReference type="FunFam" id="3.30.230.20:FF:000001">
    <property type="entry name" value="UDP-3-O-acyl-N-acetylglucosamine deacetylase"/>
    <property type="match status" value="1"/>
</dbReference>
<dbReference type="Gene3D" id="3.30.230.20">
    <property type="entry name" value="lpxc deacetylase, domain 1"/>
    <property type="match status" value="1"/>
</dbReference>
<dbReference type="Gene3D" id="3.30.1700.10">
    <property type="entry name" value="lpxc deacetylase, domain 2"/>
    <property type="match status" value="1"/>
</dbReference>
<dbReference type="HAMAP" id="MF_00388">
    <property type="entry name" value="LpxC"/>
    <property type="match status" value="1"/>
</dbReference>
<dbReference type="InterPro" id="IPR020568">
    <property type="entry name" value="Ribosomal_Su5_D2-typ_SF"/>
</dbReference>
<dbReference type="InterPro" id="IPR004463">
    <property type="entry name" value="UDP-acyl_GlcNac_deAcase"/>
</dbReference>
<dbReference type="InterPro" id="IPR011334">
    <property type="entry name" value="UDP-acyl_GlcNac_deAcase_C"/>
</dbReference>
<dbReference type="InterPro" id="IPR015870">
    <property type="entry name" value="UDP-acyl_N-AcGlcN_deAcase_N"/>
</dbReference>
<dbReference type="NCBIfam" id="TIGR00325">
    <property type="entry name" value="lpxC"/>
    <property type="match status" value="1"/>
</dbReference>
<dbReference type="PANTHER" id="PTHR33694">
    <property type="entry name" value="UDP-3-O-ACYL-N-ACETYLGLUCOSAMINE DEACETYLASE 1, MITOCHONDRIAL-RELATED"/>
    <property type="match status" value="1"/>
</dbReference>
<dbReference type="PANTHER" id="PTHR33694:SF1">
    <property type="entry name" value="UDP-3-O-ACYL-N-ACETYLGLUCOSAMINE DEACETYLASE 1, MITOCHONDRIAL-RELATED"/>
    <property type="match status" value="1"/>
</dbReference>
<dbReference type="Pfam" id="PF03331">
    <property type="entry name" value="LpxC"/>
    <property type="match status" value="1"/>
</dbReference>
<dbReference type="SUPFAM" id="SSF54211">
    <property type="entry name" value="Ribosomal protein S5 domain 2-like"/>
    <property type="match status" value="2"/>
</dbReference>
<organism>
    <name type="scientific">Salmonella heidelberg (strain SL476)</name>
    <dbReference type="NCBI Taxonomy" id="454169"/>
    <lineage>
        <taxon>Bacteria</taxon>
        <taxon>Pseudomonadati</taxon>
        <taxon>Pseudomonadota</taxon>
        <taxon>Gammaproteobacteria</taxon>
        <taxon>Enterobacterales</taxon>
        <taxon>Enterobacteriaceae</taxon>
        <taxon>Salmonella</taxon>
    </lineage>
</organism>
<feature type="chain" id="PRO_1000122817" description="UDP-3-O-acyl-N-acetylglucosamine deacetylase">
    <location>
        <begin position="1"/>
        <end position="305"/>
    </location>
</feature>
<feature type="active site" description="Proton donor" evidence="1">
    <location>
        <position position="265"/>
    </location>
</feature>
<feature type="binding site" evidence="1">
    <location>
        <position position="79"/>
    </location>
    <ligand>
        <name>Zn(2+)</name>
        <dbReference type="ChEBI" id="CHEBI:29105"/>
    </ligand>
</feature>
<feature type="binding site" evidence="1">
    <location>
        <position position="238"/>
    </location>
    <ligand>
        <name>Zn(2+)</name>
        <dbReference type="ChEBI" id="CHEBI:29105"/>
    </ligand>
</feature>
<feature type="binding site" evidence="1">
    <location>
        <position position="242"/>
    </location>
    <ligand>
        <name>Zn(2+)</name>
        <dbReference type="ChEBI" id="CHEBI:29105"/>
    </ligand>
</feature>
<accession>B4TJ93</accession>
<name>LPXC_SALHS</name>
<protein>
    <recommendedName>
        <fullName evidence="1">UDP-3-O-acyl-N-acetylglucosamine deacetylase</fullName>
        <shortName evidence="1">UDP-3-O-acyl-GlcNAc deacetylase</shortName>
        <ecNumber evidence="1">3.5.1.108</ecNumber>
    </recommendedName>
    <alternativeName>
        <fullName evidence="1">UDP-3-O-[R-3-hydroxymyristoyl]-N-acetylglucosamine deacetylase</fullName>
    </alternativeName>
</protein>
<proteinExistence type="inferred from homology"/>
<reference key="1">
    <citation type="journal article" date="2011" name="J. Bacteriol.">
        <title>Comparative genomics of 28 Salmonella enterica isolates: evidence for CRISPR-mediated adaptive sublineage evolution.</title>
        <authorList>
            <person name="Fricke W.F."/>
            <person name="Mammel M.K."/>
            <person name="McDermott P.F."/>
            <person name="Tartera C."/>
            <person name="White D.G."/>
            <person name="Leclerc J.E."/>
            <person name="Ravel J."/>
            <person name="Cebula T.A."/>
        </authorList>
    </citation>
    <scope>NUCLEOTIDE SEQUENCE [LARGE SCALE GENOMIC DNA]</scope>
    <source>
        <strain>SL476</strain>
    </source>
</reference>
<gene>
    <name evidence="1" type="primary">lpxC</name>
    <name type="ordered locus">SeHA_C0146</name>
</gene>
<keyword id="KW-0378">Hydrolase</keyword>
<keyword id="KW-0441">Lipid A biosynthesis</keyword>
<keyword id="KW-0444">Lipid biosynthesis</keyword>
<keyword id="KW-0443">Lipid metabolism</keyword>
<keyword id="KW-0479">Metal-binding</keyword>
<keyword id="KW-0862">Zinc</keyword>
<sequence length="305" mass="33985">MIKQRTLKRIVQATGVGLHTGKKVTLTLRPAPANTGVIYRRTDLNPPVDFPADAKSVRDTMLCTCLVNEHDVRISTVEHLNAALAGLGIDNIVIEVNAPEIPIMDGSAAPFVYLLLDAGIDELNCAKKFVRIKETVRVEDGDKWAEFRPYNGFTLDFTIDFNHPAIDSSSQRYAMNFSADAFMRQISRARTFGFMRDIEYLQSRGLCLGGSFDCAIVVDDYRVLNEDGLRFEDEFVRHKMLDAIGDLFMCGHNIIGAFTAYKSGHALNNKLLQAVLAKQEAWEFVTFQDDAELPLAFKAPSTVLA</sequence>
<evidence type="ECO:0000255" key="1">
    <source>
        <dbReference type="HAMAP-Rule" id="MF_00388"/>
    </source>
</evidence>
<comment type="function">
    <text evidence="1">Catalyzes the hydrolysis of UDP-3-O-myristoyl-N-acetylglucosamine to form UDP-3-O-myristoylglucosamine and acetate, the committed step in lipid A biosynthesis.</text>
</comment>
<comment type="catalytic activity">
    <reaction evidence="1">
        <text>a UDP-3-O-[(3R)-3-hydroxyacyl]-N-acetyl-alpha-D-glucosamine + H2O = a UDP-3-O-[(3R)-3-hydroxyacyl]-alpha-D-glucosamine + acetate</text>
        <dbReference type="Rhea" id="RHEA:67816"/>
        <dbReference type="ChEBI" id="CHEBI:15377"/>
        <dbReference type="ChEBI" id="CHEBI:30089"/>
        <dbReference type="ChEBI" id="CHEBI:137740"/>
        <dbReference type="ChEBI" id="CHEBI:173225"/>
        <dbReference type="EC" id="3.5.1.108"/>
    </reaction>
</comment>
<comment type="cofactor">
    <cofactor evidence="1">
        <name>Zn(2+)</name>
        <dbReference type="ChEBI" id="CHEBI:29105"/>
    </cofactor>
</comment>
<comment type="pathway">
    <text evidence="1">Glycolipid biosynthesis; lipid IV(A) biosynthesis; lipid IV(A) from (3R)-3-hydroxytetradecanoyl-[acyl-carrier-protein] and UDP-N-acetyl-alpha-D-glucosamine: step 2/6.</text>
</comment>
<comment type="similarity">
    <text evidence="1">Belongs to the LpxC family.</text>
</comment>